<feature type="chain" id="PRO_0000245947" description="FMN-dependent NADH:quinone oxidoreductase 4">
    <location>
        <begin position="1"/>
        <end position="206"/>
    </location>
</feature>
<feature type="binding site" evidence="1">
    <location>
        <position position="10"/>
    </location>
    <ligand>
        <name>FMN</name>
        <dbReference type="ChEBI" id="CHEBI:58210"/>
    </ligand>
</feature>
<feature type="binding site" evidence="1">
    <location>
        <begin position="136"/>
        <end position="139"/>
    </location>
    <ligand>
        <name>FMN</name>
        <dbReference type="ChEBI" id="CHEBI:58210"/>
    </ligand>
</feature>
<keyword id="KW-0285">Flavoprotein</keyword>
<keyword id="KW-0288">FMN</keyword>
<keyword id="KW-0520">NAD</keyword>
<keyword id="KW-0560">Oxidoreductase</keyword>
<reference key="1">
    <citation type="journal article" date="2005" name="Nat. Biotechnol.">
        <title>Complete genome sequence of the plant commensal Pseudomonas fluorescens Pf-5.</title>
        <authorList>
            <person name="Paulsen I.T."/>
            <person name="Press C.M."/>
            <person name="Ravel J."/>
            <person name="Kobayashi D.Y."/>
            <person name="Myers G.S.A."/>
            <person name="Mavrodi D.V."/>
            <person name="DeBoy R.T."/>
            <person name="Seshadri R."/>
            <person name="Ren Q."/>
            <person name="Madupu R."/>
            <person name="Dodson R.J."/>
            <person name="Durkin A.S."/>
            <person name="Brinkac L.M."/>
            <person name="Daugherty S.C."/>
            <person name="Sullivan S.A."/>
            <person name="Rosovitz M.J."/>
            <person name="Gwinn M.L."/>
            <person name="Zhou L."/>
            <person name="Schneider D.J."/>
            <person name="Cartinhour S.W."/>
            <person name="Nelson W.C."/>
            <person name="Weidman J."/>
            <person name="Watkins K."/>
            <person name="Tran K."/>
            <person name="Khouri H."/>
            <person name="Pierson E.A."/>
            <person name="Pierson L.S. III"/>
            <person name="Thomashow L.S."/>
            <person name="Loper J.E."/>
        </authorList>
    </citation>
    <scope>NUCLEOTIDE SEQUENCE [LARGE SCALE GENOMIC DNA]</scope>
    <source>
        <strain>ATCC BAA-477 / NRRL B-23932 / Pf-5</strain>
    </source>
</reference>
<protein>
    <recommendedName>
        <fullName evidence="1">FMN-dependent NADH:quinone oxidoreductase 4</fullName>
        <ecNumber evidence="1">1.6.5.-</ecNumber>
    </recommendedName>
    <alternativeName>
        <fullName evidence="1">Azo-dye reductase 4</fullName>
    </alternativeName>
    <alternativeName>
        <fullName evidence="1">FMN-dependent NADH-azo compound oxidoreductase 4</fullName>
    </alternativeName>
    <alternativeName>
        <fullName evidence="1">FMN-dependent NADH-azoreductase 4</fullName>
        <ecNumber evidence="1">1.7.1.17</ecNumber>
    </alternativeName>
</protein>
<comment type="function">
    <text evidence="1">Quinone reductase that provides resistance to thiol-specific stress caused by electrophilic quinones.</text>
</comment>
<comment type="function">
    <text evidence="1">Also exhibits azoreductase activity. Catalyzes the reductive cleavage of the azo bond in aromatic azo compounds to the corresponding amines.</text>
</comment>
<comment type="catalytic activity">
    <reaction evidence="1">
        <text>2 a quinone + NADH + H(+) = 2 a 1,4-benzosemiquinone + NAD(+)</text>
        <dbReference type="Rhea" id="RHEA:65952"/>
        <dbReference type="ChEBI" id="CHEBI:15378"/>
        <dbReference type="ChEBI" id="CHEBI:57540"/>
        <dbReference type="ChEBI" id="CHEBI:57945"/>
        <dbReference type="ChEBI" id="CHEBI:132124"/>
        <dbReference type="ChEBI" id="CHEBI:134225"/>
    </reaction>
</comment>
<comment type="catalytic activity">
    <reaction evidence="1">
        <text>N,N-dimethyl-1,4-phenylenediamine + anthranilate + 2 NAD(+) = 2-(4-dimethylaminophenyl)diazenylbenzoate + 2 NADH + 2 H(+)</text>
        <dbReference type="Rhea" id="RHEA:55872"/>
        <dbReference type="ChEBI" id="CHEBI:15378"/>
        <dbReference type="ChEBI" id="CHEBI:15783"/>
        <dbReference type="ChEBI" id="CHEBI:16567"/>
        <dbReference type="ChEBI" id="CHEBI:57540"/>
        <dbReference type="ChEBI" id="CHEBI:57945"/>
        <dbReference type="ChEBI" id="CHEBI:71579"/>
        <dbReference type="EC" id="1.7.1.17"/>
    </reaction>
</comment>
<comment type="cofactor">
    <cofactor evidence="1">
        <name>FMN</name>
        <dbReference type="ChEBI" id="CHEBI:58210"/>
    </cofactor>
    <text evidence="1">Binds 1 FMN per subunit.</text>
</comment>
<comment type="subunit">
    <text evidence="1">Homodimer.</text>
</comment>
<comment type="similarity">
    <text evidence="1">Belongs to the azoreductase type 1 family.</text>
</comment>
<organism>
    <name type="scientific">Pseudomonas fluorescens (strain ATCC BAA-477 / NRRL B-23932 / Pf-5)</name>
    <dbReference type="NCBI Taxonomy" id="220664"/>
    <lineage>
        <taxon>Bacteria</taxon>
        <taxon>Pseudomonadati</taxon>
        <taxon>Pseudomonadota</taxon>
        <taxon>Gammaproteobacteria</taxon>
        <taxon>Pseudomonadales</taxon>
        <taxon>Pseudomonadaceae</taxon>
        <taxon>Pseudomonas</taxon>
    </lineage>
</organism>
<gene>
    <name evidence="1" type="primary">azoR4</name>
    <name type="ordered locus">PFL_2189</name>
</gene>
<sequence>MNNLLLINASPRGQGSHGNQLALELVSSLRQRYPHLELVERDLGANPLPPLGMDYAHALTTPTPFDAPLFEVSEGLIGELERSDALLIATPMHNFTLPAALKLWIDYVLRIHRTFSSGPEGKVGLLKDRPVHVLVSSGGFHQGERARQPDFLTPYLRQVLNTLGLFDLQFTYLQGLVFGDEAVRATLDEARSALSLQPLFNPLVCA</sequence>
<accession>Q4KEN7</accession>
<evidence type="ECO:0000255" key="1">
    <source>
        <dbReference type="HAMAP-Rule" id="MF_01216"/>
    </source>
</evidence>
<proteinExistence type="inferred from homology"/>
<dbReference type="EC" id="1.6.5.-" evidence="1"/>
<dbReference type="EC" id="1.7.1.17" evidence="1"/>
<dbReference type="EMBL" id="CP000076">
    <property type="protein sequence ID" value="AAY91463.1"/>
    <property type="molecule type" value="Genomic_DNA"/>
</dbReference>
<dbReference type="RefSeq" id="WP_011060489.1">
    <property type="nucleotide sequence ID" value="NC_004129.6"/>
</dbReference>
<dbReference type="SMR" id="Q4KEN7"/>
<dbReference type="STRING" id="220664.PFL_2189"/>
<dbReference type="KEGG" id="pfl:PFL_2189"/>
<dbReference type="PATRIC" id="fig|220664.5.peg.2222"/>
<dbReference type="eggNOG" id="COG1182">
    <property type="taxonomic scope" value="Bacteria"/>
</dbReference>
<dbReference type="HOGENOM" id="CLU_088964_0_2_6"/>
<dbReference type="Proteomes" id="UP000008540">
    <property type="component" value="Chromosome"/>
</dbReference>
<dbReference type="GO" id="GO:0009055">
    <property type="term" value="F:electron transfer activity"/>
    <property type="evidence" value="ECO:0007669"/>
    <property type="project" value="UniProtKB-UniRule"/>
</dbReference>
<dbReference type="GO" id="GO:0010181">
    <property type="term" value="F:FMN binding"/>
    <property type="evidence" value="ECO:0007669"/>
    <property type="project" value="UniProtKB-UniRule"/>
</dbReference>
<dbReference type="GO" id="GO:0016652">
    <property type="term" value="F:oxidoreductase activity, acting on NAD(P)H as acceptor"/>
    <property type="evidence" value="ECO:0007669"/>
    <property type="project" value="UniProtKB-UniRule"/>
</dbReference>
<dbReference type="GO" id="GO:0016655">
    <property type="term" value="F:oxidoreductase activity, acting on NAD(P)H, quinone or similar compound as acceptor"/>
    <property type="evidence" value="ECO:0007669"/>
    <property type="project" value="InterPro"/>
</dbReference>
<dbReference type="Gene3D" id="3.40.50.360">
    <property type="match status" value="1"/>
</dbReference>
<dbReference type="HAMAP" id="MF_01216">
    <property type="entry name" value="Azoreductase_type1"/>
    <property type="match status" value="1"/>
</dbReference>
<dbReference type="InterPro" id="IPR003680">
    <property type="entry name" value="Flavodoxin_fold"/>
</dbReference>
<dbReference type="InterPro" id="IPR029039">
    <property type="entry name" value="Flavoprotein-like_sf"/>
</dbReference>
<dbReference type="InterPro" id="IPR050104">
    <property type="entry name" value="FMN-dep_NADH:Q_OxRdtase_AzoR1"/>
</dbReference>
<dbReference type="InterPro" id="IPR023048">
    <property type="entry name" value="NADH:quinone_OxRdtase_FMN_depd"/>
</dbReference>
<dbReference type="PANTHER" id="PTHR43741">
    <property type="entry name" value="FMN-DEPENDENT NADH-AZOREDUCTASE 1"/>
    <property type="match status" value="1"/>
</dbReference>
<dbReference type="PANTHER" id="PTHR43741:SF4">
    <property type="entry name" value="FMN-DEPENDENT NADH:QUINONE OXIDOREDUCTASE"/>
    <property type="match status" value="1"/>
</dbReference>
<dbReference type="Pfam" id="PF02525">
    <property type="entry name" value="Flavodoxin_2"/>
    <property type="match status" value="1"/>
</dbReference>
<dbReference type="SUPFAM" id="SSF52218">
    <property type="entry name" value="Flavoproteins"/>
    <property type="match status" value="1"/>
</dbReference>
<name>AZOR4_PSEF5</name>